<name>Y3371_MYCTU</name>
<evidence type="ECO:0000250" key="1">
    <source>
        <dbReference type="UniProtKB" id="P9WKC9"/>
    </source>
</evidence>
<evidence type="ECO:0000255" key="2"/>
<evidence type="ECO:0000256" key="3">
    <source>
        <dbReference type="SAM" id="MobiDB-lite"/>
    </source>
</evidence>
<evidence type="ECO:0000269" key="4">
    <source>
    </source>
</evidence>
<evidence type="ECO:0000305" key="5"/>
<comment type="function">
    <text evidence="1">Catalyzes the terminal and only committed step in triacylglycerol synthesis by using diacylglycerol and fatty acyl CoA as substrates. Required for storage lipid synthesis.</text>
</comment>
<comment type="function">
    <text evidence="4">Upon expression in E.coli functions weakly as a triacylglycerol synthase, making triacylglycerol (TG) from diolein and long-chain fatty acyl-CoA. Has no wax synthase activity to produce wax esters.</text>
</comment>
<comment type="catalytic activity">
    <reaction evidence="4">
        <text>an acyl-CoA + a 1,2-diacyl-sn-glycerol = a triacyl-sn-glycerol + CoA</text>
        <dbReference type="Rhea" id="RHEA:10868"/>
        <dbReference type="ChEBI" id="CHEBI:17815"/>
        <dbReference type="ChEBI" id="CHEBI:57287"/>
        <dbReference type="ChEBI" id="CHEBI:58342"/>
        <dbReference type="ChEBI" id="CHEBI:64615"/>
        <dbReference type="EC" id="2.3.1.20"/>
    </reaction>
</comment>
<comment type="catalytic activity">
    <reaction evidence="4">
        <text>di-(9Z)-octadecenoylglycerol + (9Z)-octadecenoyl-CoA = 1,2,3-tri-(9Z-octadecenoyl)-glycerol + CoA</text>
        <dbReference type="Rhea" id="RHEA:45780"/>
        <dbReference type="ChEBI" id="CHEBI:53753"/>
        <dbReference type="ChEBI" id="CHEBI:57287"/>
        <dbReference type="ChEBI" id="CHEBI:57387"/>
        <dbReference type="ChEBI" id="CHEBI:75945"/>
    </reaction>
    <physiologicalReaction direction="left-to-right" evidence="4">
        <dbReference type="Rhea" id="RHEA:45781"/>
    </physiologicalReaction>
</comment>
<comment type="pathway">
    <text>Glycerolipid metabolism; triacylglycerol biosynthesis.</text>
</comment>
<comment type="induction">
    <text evidence="4">A possible member of the dormancy regulon. Induced in response to reduced oxygen tension (hypoxia) and low levels of nitric oxide (NO). It is hoped that this regulon will give insight into the latent, or dormant phase of infection.</text>
</comment>
<comment type="similarity">
    <text evidence="5">Belongs to the long-chain O-acyltransferase family.</text>
</comment>
<accession>P9WKA9</accession>
<accession>L0TDY3</accession>
<accession>O50400</accession>
<feature type="chain" id="PRO_0000222919" description="Putative diacyglycerol O-acyltransferase Rv3371">
    <location>
        <begin position="1"/>
        <end position="446"/>
    </location>
</feature>
<feature type="region of interest" description="Disordered" evidence="3">
    <location>
        <begin position="425"/>
        <end position="446"/>
    </location>
</feature>
<feature type="active site" description="Proton acceptor" evidence="2">
    <location>
        <position position="129"/>
    </location>
</feature>
<sequence length="446" mass="48847">MAQLTALDAGFLKSRDPERHPGLAIGAVAVVNGAAPSYDQLKTVLTERIKSIPRCTQVLATEWIDYPGFDLTQHVRRVALPRPGDEAELFRAIALALERPLDPDRPLWECWIIEGLNGNRWAILIKIHHCMAGAMSAAHLLARLCDDADGSAFANNVDIKQIPPYGDARSWAETLWRMSVSIAGAVCTAAARAVSWPAVTSPAGPVTTRRRYQAVRVPRDAVDAVCHKFGVTANDVALAAITEGFRTVLLHRGQQPRADSLRTLEKTDGSSAMLPYLPVEYDDPVRRLRTVHNRSQQSGRRQPDSLSDYTPLMLCAKMIHALARLPQQGIVTLATSAPRPRHQLRLMGQKMDQVLPIPPTALQLSTGIAVLSYGDELVFGITADYDAASEMQQLVNGIELGVARLVALSDDSVLLFTKDRRKRSSRALPSAARRGRPSVPTARARH</sequence>
<reference key="1">
    <citation type="journal article" date="1998" name="Nature">
        <title>Deciphering the biology of Mycobacterium tuberculosis from the complete genome sequence.</title>
        <authorList>
            <person name="Cole S.T."/>
            <person name="Brosch R."/>
            <person name="Parkhill J."/>
            <person name="Garnier T."/>
            <person name="Churcher C.M."/>
            <person name="Harris D.E."/>
            <person name="Gordon S.V."/>
            <person name="Eiglmeier K."/>
            <person name="Gas S."/>
            <person name="Barry C.E. III"/>
            <person name="Tekaia F."/>
            <person name="Badcock K."/>
            <person name="Basham D."/>
            <person name="Brown D."/>
            <person name="Chillingworth T."/>
            <person name="Connor R."/>
            <person name="Davies R.M."/>
            <person name="Devlin K."/>
            <person name="Feltwell T."/>
            <person name="Gentles S."/>
            <person name="Hamlin N."/>
            <person name="Holroyd S."/>
            <person name="Hornsby T."/>
            <person name="Jagels K."/>
            <person name="Krogh A."/>
            <person name="McLean J."/>
            <person name="Moule S."/>
            <person name="Murphy L.D."/>
            <person name="Oliver S."/>
            <person name="Osborne J."/>
            <person name="Quail M.A."/>
            <person name="Rajandream M.A."/>
            <person name="Rogers J."/>
            <person name="Rutter S."/>
            <person name="Seeger K."/>
            <person name="Skelton S."/>
            <person name="Squares S."/>
            <person name="Squares R."/>
            <person name="Sulston J.E."/>
            <person name="Taylor K."/>
            <person name="Whitehead S."/>
            <person name="Barrell B.G."/>
        </authorList>
    </citation>
    <scope>NUCLEOTIDE SEQUENCE [LARGE SCALE GENOMIC DNA]</scope>
    <source>
        <strain>ATCC 25618 / H37Rv</strain>
    </source>
</reference>
<reference key="2">
    <citation type="journal article" date="2004" name="J. Bacteriol.">
        <title>Induction of a novel class of diacylglycerol acyltransferases and triacylglycerol accumulation in Mycobacterium tuberculosis as it goes into a dormancy-like state in culture.</title>
        <authorList>
            <person name="Daniel J."/>
            <person name="Deb C."/>
            <person name="Dubey V.S."/>
            <person name="Sirakova T.D."/>
            <person name="Abomoelak B."/>
            <person name="Morbidoni H.R."/>
            <person name="Kolattukudy P.E."/>
        </authorList>
    </citation>
    <scope>EXPRESSION IN E.COLI</scope>
    <scope>CATALYTIC ACTIVITY</scope>
    <scope>INDUCTION BY HYPOXIA</scope>
    <scope>BY NITRIC OXIDE (NO)</scope>
    <source>
        <strain>ATCC 25618 / H37Rv</strain>
    </source>
</reference>
<reference key="3">
    <citation type="journal article" date="2011" name="Mol. Cell. Proteomics">
        <title>Proteogenomic analysis of Mycobacterium tuberculosis by high resolution mass spectrometry.</title>
        <authorList>
            <person name="Kelkar D.S."/>
            <person name="Kumar D."/>
            <person name="Kumar P."/>
            <person name="Balakrishnan L."/>
            <person name="Muthusamy B."/>
            <person name="Yadav A.K."/>
            <person name="Shrivastava P."/>
            <person name="Marimuthu A."/>
            <person name="Anand S."/>
            <person name="Sundaram H."/>
            <person name="Kingsbury R."/>
            <person name="Harsha H.C."/>
            <person name="Nair B."/>
            <person name="Prasad T.S."/>
            <person name="Chauhan D.S."/>
            <person name="Katoch K."/>
            <person name="Katoch V.M."/>
            <person name="Kumar P."/>
            <person name="Chaerkady R."/>
            <person name="Ramachandran S."/>
            <person name="Dash D."/>
            <person name="Pandey A."/>
        </authorList>
    </citation>
    <scope>IDENTIFICATION BY MASS SPECTROMETRY [LARGE SCALE ANALYSIS]</scope>
    <source>
        <strain>ATCC 25618 / H37Rv</strain>
    </source>
</reference>
<organism>
    <name type="scientific">Mycobacterium tuberculosis (strain ATCC 25618 / H37Rv)</name>
    <dbReference type="NCBI Taxonomy" id="83332"/>
    <lineage>
        <taxon>Bacteria</taxon>
        <taxon>Bacillati</taxon>
        <taxon>Actinomycetota</taxon>
        <taxon>Actinomycetes</taxon>
        <taxon>Mycobacteriales</taxon>
        <taxon>Mycobacteriaceae</taxon>
        <taxon>Mycobacterium</taxon>
        <taxon>Mycobacterium tuberculosis complex</taxon>
    </lineage>
</organism>
<keyword id="KW-0012">Acyltransferase</keyword>
<keyword id="KW-0319">Glycerol metabolism</keyword>
<keyword id="KW-0444">Lipid biosynthesis</keyword>
<keyword id="KW-0443">Lipid metabolism</keyword>
<keyword id="KW-1185">Reference proteome</keyword>
<keyword id="KW-0808">Transferase</keyword>
<protein>
    <recommendedName>
        <fullName>Putative diacyglycerol O-acyltransferase Rv3371</fullName>
        <ecNumber evidence="4">2.3.1.20</ecNumber>
    </recommendedName>
    <alternativeName>
        <fullName>Putative triacylglycerol synthase Rv3371</fullName>
    </alternativeName>
</protein>
<proteinExistence type="evidence at protein level"/>
<gene>
    <name type="ordered locus">Rv3371</name>
    <name type="ORF">MTV004.29</name>
</gene>
<dbReference type="EC" id="2.3.1.20" evidence="4"/>
<dbReference type="EMBL" id="AL123456">
    <property type="protein sequence ID" value="CCP46192.1"/>
    <property type="molecule type" value="Genomic_DNA"/>
</dbReference>
<dbReference type="PIR" id="B70972">
    <property type="entry name" value="B70972"/>
</dbReference>
<dbReference type="RefSeq" id="NP_217888.1">
    <property type="nucleotide sequence ID" value="NC_000962.3"/>
</dbReference>
<dbReference type="RefSeq" id="WP_003900036.1">
    <property type="nucleotide sequence ID" value="NZ_NVQJ01000052.1"/>
</dbReference>
<dbReference type="SMR" id="P9WKA9"/>
<dbReference type="STRING" id="83332.Rv3371"/>
<dbReference type="SwissLipids" id="SLP:000001177"/>
<dbReference type="PaxDb" id="83332-Rv3371"/>
<dbReference type="DNASU" id="888053"/>
<dbReference type="GeneID" id="888053"/>
<dbReference type="KEGG" id="mtu:Rv3371"/>
<dbReference type="KEGG" id="mtv:RVBD_3371"/>
<dbReference type="TubercuList" id="Rv3371"/>
<dbReference type="eggNOG" id="COG1020">
    <property type="taxonomic scope" value="Bacteria"/>
</dbReference>
<dbReference type="InParanoid" id="P9WKA9"/>
<dbReference type="OrthoDB" id="9810950at2"/>
<dbReference type="PhylomeDB" id="P9WKA9"/>
<dbReference type="BRENDA" id="2.3.1.20">
    <property type="organism ID" value="3445"/>
</dbReference>
<dbReference type="UniPathway" id="UPA00282"/>
<dbReference type="Proteomes" id="UP000001584">
    <property type="component" value="Chromosome"/>
</dbReference>
<dbReference type="GO" id="GO:0009274">
    <property type="term" value="C:peptidoglycan-based cell wall"/>
    <property type="evidence" value="ECO:0007005"/>
    <property type="project" value="MTBBASE"/>
</dbReference>
<dbReference type="GO" id="GO:0005886">
    <property type="term" value="C:plasma membrane"/>
    <property type="evidence" value="ECO:0007005"/>
    <property type="project" value="MTBBASE"/>
</dbReference>
<dbReference type="GO" id="GO:0004144">
    <property type="term" value="F:diacylglycerol O-acyltransferase activity"/>
    <property type="evidence" value="ECO:0007669"/>
    <property type="project" value="UniProtKB-EC"/>
</dbReference>
<dbReference type="GO" id="GO:0008374">
    <property type="term" value="F:O-acyltransferase activity"/>
    <property type="evidence" value="ECO:0000318"/>
    <property type="project" value="GO_Central"/>
</dbReference>
<dbReference type="GO" id="GO:0051701">
    <property type="term" value="P:biological process involved in interaction with host"/>
    <property type="evidence" value="ECO:0000318"/>
    <property type="project" value="GO_Central"/>
</dbReference>
<dbReference type="GO" id="GO:0006071">
    <property type="term" value="P:glycerol metabolic process"/>
    <property type="evidence" value="ECO:0007669"/>
    <property type="project" value="UniProtKB-KW"/>
</dbReference>
<dbReference type="GO" id="GO:0001666">
    <property type="term" value="P:response to hypoxia"/>
    <property type="evidence" value="ECO:0000318"/>
    <property type="project" value="GO_Central"/>
</dbReference>
<dbReference type="GO" id="GO:0071731">
    <property type="term" value="P:response to nitric oxide"/>
    <property type="evidence" value="ECO:0000318"/>
    <property type="project" value="GO_Central"/>
</dbReference>
<dbReference type="GO" id="GO:0019432">
    <property type="term" value="P:triglyceride biosynthetic process"/>
    <property type="evidence" value="ECO:0000318"/>
    <property type="project" value="GO_Central"/>
</dbReference>
<dbReference type="Gene3D" id="3.30.559.10">
    <property type="entry name" value="Chloramphenicol acetyltransferase-like domain"/>
    <property type="match status" value="1"/>
</dbReference>
<dbReference type="InterPro" id="IPR014292">
    <property type="entry name" value="Acyl_transf_WS/DGAT"/>
</dbReference>
<dbReference type="InterPro" id="IPR023213">
    <property type="entry name" value="CAT-like_dom_sf"/>
</dbReference>
<dbReference type="InterPro" id="IPR045034">
    <property type="entry name" value="O-acyltransferase_WSD1-like"/>
</dbReference>
<dbReference type="InterPro" id="IPR009721">
    <property type="entry name" value="O-acyltransferase_WSD1_C"/>
</dbReference>
<dbReference type="InterPro" id="IPR004255">
    <property type="entry name" value="O-acyltransferase_WSD1_N"/>
</dbReference>
<dbReference type="NCBIfam" id="TIGR02946">
    <property type="entry name" value="acyl_WS_DGAT"/>
    <property type="match status" value="1"/>
</dbReference>
<dbReference type="PANTHER" id="PTHR31650">
    <property type="entry name" value="O-ACYLTRANSFERASE (WSD1-LIKE) FAMILY PROTEIN"/>
    <property type="match status" value="1"/>
</dbReference>
<dbReference type="PANTHER" id="PTHR31650:SF1">
    <property type="entry name" value="WAX ESTER SYNTHASE_DIACYLGLYCEROL ACYLTRANSFERASE 4-RELATED"/>
    <property type="match status" value="1"/>
</dbReference>
<dbReference type="Pfam" id="PF06974">
    <property type="entry name" value="WS_DGAT_C"/>
    <property type="match status" value="1"/>
</dbReference>
<dbReference type="Pfam" id="PF03007">
    <property type="entry name" value="WS_DGAT_cat"/>
    <property type="match status" value="1"/>
</dbReference>
<dbReference type="SUPFAM" id="SSF52777">
    <property type="entry name" value="CoA-dependent acyltransferases"/>
    <property type="match status" value="1"/>
</dbReference>